<dbReference type="EMBL" id="U22382">
    <property type="protein sequence ID" value="AAB67531.1"/>
    <property type="status" value="ALT_SEQ"/>
    <property type="molecule type" value="Genomic_DNA"/>
</dbReference>
<dbReference type="EMBL" id="AY558230">
    <property type="protein sequence ID" value="AAS56556.1"/>
    <property type="status" value="ALT_SEQ"/>
    <property type="molecule type" value="Genomic_DNA"/>
</dbReference>
<dbReference type="EMBL" id="BK006945">
    <property type="protein sequence ID" value="DAA09745.1"/>
    <property type="molecule type" value="Genomic_DNA"/>
</dbReference>
<dbReference type="PIR" id="S55967">
    <property type="entry name" value="S55967"/>
</dbReference>
<dbReference type="RefSeq" id="NP_013550.4">
    <property type="nucleotide sequence ID" value="NM_001182333.3"/>
</dbReference>
<dbReference type="SMR" id="Q06201"/>
<dbReference type="BioGRID" id="31703">
    <property type="interactions" value="49"/>
</dbReference>
<dbReference type="ComplexPortal" id="CPX-1387">
    <property type="entry name" value="Synaptonemal complex"/>
</dbReference>
<dbReference type="ComplexPortal" id="CPX-1407">
    <property type="entry name" value="ECM11-GMC2 synaptonemal assembly activation factor complex"/>
</dbReference>
<dbReference type="FunCoup" id="Q06201">
    <property type="interactions" value="26"/>
</dbReference>
<dbReference type="IntAct" id="Q06201">
    <property type="interactions" value="1"/>
</dbReference>
<dbReference type="STRING" id="4932.YLR445W"/>
<dbReference type="iPTMnet" id="Q06201"/>
<dbReference type="PaxDb" id="4932-YLR445W"/>
<dbReference type="PeptideAtlas" id="Q06201"/>
<dbReference type="EnsemblFungi" id="YLR445W_mRNA">
    <property type="protein sequence ID" value="YLR445W"/>
    <property type="gene ID" value="YLR445W"/>
</dbReference>
<dbReference type="GeneID" id="851166"/>
<dbReference type="KEGG" id="sce:YLR445W"/>
<dbReference type="AGR" id="SGD:S000004437"/>
<dbReference type="SGD" id="S000004437">
    <property type="gene designation" value="GMC2"/>
</dbReference>
<dbReference type="VEuPathDB" id="FungiDB:YLR445W"/>
<dbReference type="eggNOG" id="ENOG502S5T2">
    <property type="taxonomic scope" value="Eukaryota"/>
</dbReference>
<dbReference type="HOGENOM" id="CLU_122928_0_0_1"/>
<dbReference type="InParanoid" id="Q06201"/>
<dbReference type="OMA" id="QDGMMSK"/>
<dbReference type="OrthoDB" id="4067025at2759"/>
<dbReference type="BioCyc" id="YEAST:G3O-32500-MONOMER"/>
<dbReference type="BioGRID-ORCS" id="851166">
    <property type="hits" value="6 hits in 10 CRISPR screens"/>
</dbReference>
<dbReference type="PRO" id="PR:Q06201"/>
<dbReference type="Proteomes" id="UP000002311">
    <property type="component" value="Chromosome XII"/>
</dbReference>
<dbReference type="RNAct" id="Q06201">
    <property type="molecule type" value="protein"/>
</dbReference>
<dbReference type="GO" id="GO:0000794">
    <property type="term" value="C:condensed nuclear chromosome"/>
    <property type="evidence" value="ECO:0000314"/>
    <property type="project" value="ComplexPortal"/>
</dbReference>
<dbReference type="GO" id="GO:0005777">
    <property type="term" value="C:peroxisome"/>
    <property type="evidence" value="ECO:0000314"/>
    <property type="project" value="SGD"/>
</dbReference>
<dbReference type="GO" id="GO:0000795">
    <property type="term" value="C:synaptonemal complex"/>
    <property type="evidence" value="ECO:0000314"/>
    <property type="project" value="SGD"/>
</dbReference>
<dbReference type="GO" id="GO:0007129">
    <property type="term" value="P:homologous chromosome pairing at meiosis"/>
    <property type="evidence" value="ECO:0000303"/>
    <property type="project" value="ComplexPortal"/>
</dbReference>
<dbReference type="GO" id="GO:0035825">
    <property type="term" value="P:homologous recombination"/>
    <property type="evidence" value="ECO:0000303"/>
    <property type="project" value="ComplexPortal"/>
</dbReference>
<dbReference type="GO" id="GO:0051321">
    <property type="term" value="P:meiotic cell cycle"/>
    <property type="evidence" value="ECO:0000315"/>
    <property type="project" value="SGD"/>
</dbReference>
<dbReference type="GO" id="GO:0016925">
    <property type="term" value="P:protein sumoylation"/>
    <property type="evidence" value="ECO:0000315"/>
    <property type="project" value="SGD"/>
</dbReference>
<dbReference type="GO" id="GO:0007131">
    <property type="term" value="P:reciprocal meiotic recombination"/>
    <property type="evidence" value="ECO:0000315"/>
    <property type="project" value="SGD"/>
</dbReference>
<dbReference type="GO" id="GO:0007130">
    <property type="term" value="P:synaptonemal complex assembly"/>
    <property type="evidence" value="ECO:0000315"/>
    <property type="project" value="ComplexPortal"/>
</dbReference>
<dbReference type="GO" id="GO:0070193">
    <property type="term" value="P:synaptonemal complex organization"/>
    <property type="evidence" value="ECO:0000315"/>
    <property type="project" value="SGD"/>
</dbReference>
<name>GMC2_YEAST</name>
<feature type="chain" id="PRO_0000247355" description="Grand meiotic recombination cluster protein 2">
    <location>
        <begin position="1"/>
        <end position="188"/>
    </location>
</feature>
<feature type="region of interest" description="Disordered" evidence="1">
    <location>
        <begin position="1"/>
        <end position="31"/>
    </location>
</feature>
<feature type="compositionally biased region" description="Polar residues" evidence="1">
    <location>
        <begin position="1"/>
        <end position="13"/>
    </location>
</feature>
<feature type="compositionally biased region" description="Polar residues" evidence="1">
    <location>
        <begin position="21"/>
        <end position="31"/>
    </location>
</feature>
<organism>
    <name type="scientific">Saccharomyces cerevisiae (strain ATCC 204508 / S288c)</name>
    <name type="common">Baker's yeast</name>
    <dbReference type="NCBI Taxonomy" id="559292"/>
    <lineage>
        <taxon>Eukaryota</taxon>
        <taxon>Fungi</taxon>
        <taxon>Dikarya</taxon>
        <taxon>Ascomycota</taxon>
        <taxon>Saccharomycotina</taxon>
        <taxon>Saccharomycetes</taxon>
        <taxon>Saccharomycetales</taxon>
        <taxon>Saccharomycetaceae</taxon>
        <taxon>Saccharomyces</taxon>
    </lineage>
</organism>
<keyword id="KW-0010">Activator</keyword>
<keyword id="KW-0469">Meiosis</keyword>
<keyword id="KW-1185">Reference proteome</keyword>
<keyword id="KW-0804">Transcription</keyword>
<keyword id="KW-0805">Transcription regulation</keyword>
<proteinExistence type="evidence at protein level"/>
<reference key="1">
    <citation type="journal article" date="1997" name="Nature">
        <title>The nucleotide sequence of Saccharomyces cerevisiae chromosome XII.</title>
        <authorList>
            <person name="Johnston M."/>
            <person name="Hillier L.W."/>
            <person name="Riles L."/>
            <person name="Albermann K."/>
            <person name="Andre B."/>
            <person name="Ansorge W."/>
            <person name="Benes V."/>
            <person name="Brueckner M."/>
            <person name="Delius H."/>
            <person name="Dubois E."/>
            <person name="Duesterhoeft A."/>
            <person name="Entian K.-D."/>
            <person name="Floeth M."/>
            <person name="Goffeau A."/>
            <person name="Hebling U."/>
            <person name="Heumann K."/>
            <person name="Heuss-Neitzel D."/>
            <person name="Hilbert H."/>
            <person name="Hilger F."/>
            <person name="Kleine K."/>
            <person name="Koetter P."/>
            <person name="Louis E.J."/>
            <person name="Messenguy F."/>
            <person name="Mewes H.-W."/>
            <person name="Miosga T."/>
            <person name="Moestl D."/>
            <person name="Mueller-Auer S."/>
            <person name="Nentwich U."/>
            <person name="Obermaier B."/>
            <person name="Piravandi E."/>
            <person name="Pohl T.M."/>
            <person name="Portetelle D."/>
            <person name="Purnelle B."/>
            <person name="Rechmann S."/>
            <person name="Rieger M."/>
            <person name="Rinke M."/>
            <person name="Rose M."/>
            <person name="Scharfe M."/>
            <person name="Scherens B."/>
            <person name="Scholler P."/>
            <person name="Schwager C."/>
            <person name="Schwarz S."/>
            <person name="Underwood A.P."/>
            <person name="Urrestarazu L.A."/>
            <person name="Vandenbol M."/>
            <person name="Verhasselt P."/>
            <person name="Vierendeels F."/>
            <person name="Voet M."/>
            <person name="Volckaert G."/>
            <person name="Voss H."/>
            <person name="Wambutt R."/>
            <person name="Wedler E."/>
            <person name="Wedler H."/>
            <person name="Zimmermann F.K."/>
            <person name="Zollner A."/>
            <person name="Hani J."/>
            <person name="Hoheisel J.D."/>
        </authorList>
    </citation>
    <scope>NUCLEOTIDE SEQUENCE [LARGE SCALE GENOMIC DNA]</scope>
    <source>
        <strain>ATCC 204508 / S288c</strain>
    </source>
</reference>
<reference key="2">
    <citation type="journal article" date="2014" name="G3 (Bethesda)">
        <title>The reference genome sequence of Saccharomyces cerevisiae: Then and now.</title>
        <authorList>
            <person name="Engel S.R."/>
            <person name="Dietrich F.S."/>
            <person name="Fisk D.G."/>
            <person name="Binkley G."/>
            <person name="Balakrishnan R."/>
            <person name="Costanzo M.C."/>
            <person name="Dwight S.S."/>
            <person name="Hitz B.C."/>
            <person name="Karra K."/>
            <person name="Nash R.S."/>
            <person name="Weng S."/>
            <person name="Wong E.D."/>
            <person name="Lloyd P."/>
            <person name="Skrzypek M.S."/>
            <person name="Miyasato S.R."/>
            <person name="Simison M."/>
            <person name="Cherry J.M."/>
        </authorList>
    </citation>
    <scope>GENOME REANNOTATION</scope>
    <source>
        <strain>ATCC 204508 / S288c</strain>
    </source>
</reference>
<reference key="3">
    <citation type="journal article" date="2007" name="Genome Res.">
        <title>Approaching a complete repository of sequence-verified protein-encoding clones for Saccharomyces cerevisiae.</title>
        <authorList>
            <person name="Hu Y."/>
            <person name="Rolfs A."/>
            <person name="Bhullar B."/>
            <person name="Murthy T.V.S."/>
            <person name="Zhu C."/>
            <person name="Berger M.F."/>
            <person name="Camargo A.A."/>
            <person name="Kelley F."/>
            <person name="McCarron S."/>
            <person name="Jepson D."/>
            <person name="Richardson A."/>
            <person name="Raphael J."/>
            <person name="Moreira D."/>
            <person name="Taycher E."/>
            <person name="Zuo D."/>
            <person name="Mohr S."/>
            <person name="Kane M.F."/>
            <person name="Williamson J."/>
            <person name="Simpson A.J.G."/>
            <person name="Bulyk M.L."/>
            <person name="Harlow E."/>
            <person name="Marsischky G."/>
            <person name="Kolodner R.D."/>
            <person name="LaBaer J."/>
        </authorList>
    </citation>
    <scope>NUCLEOTIDE SEQUENCE [GENOMIC DNA]</scope>
    <source>
        <strain>ATCC 204508 / S288c</strain>
    </source>
</reference>
<reference key="4">
    <citation type="journal article" date="2003" name="Genome Biol.">
        <title>Reinvestigation of the Saccharomyces cerevisiae genome annotation by comparison to the genome of a related fungus: Ashbya gossypii.</title>
        <authorList>
            <person name="Brachat S."/>
            <person name="Dietrich F.S."/>
            <person name="Voegeli S."/>
            <person name="Zhang Z."/>
            <person name="Stuart L."/>
            <person name="Lerch A."/>
            <person name="Gates K."/>
            <person name="Gaffney T.D."/>
            <person name="Philippsen P."/>
        </authorList>
    </citation>
    <scope>GENOME REANNOTATION</scope>
    <source>
        <strain>ATCC 204511 / S288c / AB972</strain>
    </source>
</reference>
<reference key="5">
    <citation type="journal article" date="2000" name="Science">
        <title>Signaling and circuitry of multiple MAPK pathways revealed by a matrix of global gene expression profiles.</title>
        <authorList>
            <person name="Roberts C.J."/>
            <person name="Nelson B."/>
            <person name="Marton M.J."/>
            <person name="Stoughton R."/>
            <person name="Meyer M.R."/>
            <person name="Bennett H.A."/>
            <person name="He Y.D."/>
            <person name="Dai H."/>
            <person name="Walker W.L."/>
            <person name="Hughes T.R."/>
            <person name="Tyers M."/>
            <person name="Boone C."/>
            <person name="Friend S.H."/>
        </authorList>
    </citation>
    <scope>INDUCTION</scope>
</reference>
<reference key="6">
    <citation type="journal article" date="2002" name="Proc. Natl. Acad. Sci. U.S.A.">
        <title>The Ume6 regulon coordinates metabolic and meiotic gene expression in yeast.</title>
        <authorList>
            <person name="Williams R.M."/>
            <person name="Primig M."/>
            <person name="Washburn B.K."/>
            <person name="Winzeler E.A."/>
            <person name="Bellis M."/>
            <person name="Sarrauste de Menthiere C."/>
            <person name="Davis R.W."/>
            <person name="Easton Esposito R."/>
        </authorList>
    </citation>
    <scope>INDUCTION</scope>
</reference>
<reference key="7">
    <citation type="journal article" date="2006" name="Nucleic Acids Res.">
        <title>Transcriptional activators in yeast.</title>
        <authorList>
            <person name="Titz B."/>
            <person name="Thomas S."/>
            <person name="Rajagopala S.V."/>
            <person name="Chiba T."/>
            <person name="Ito T."/>
            <person name="Uetz P."/>
        </authorList>
    </citation>
    <scope>FUNCTION</scope>
</reference>
<reference key="8">
    <citation type="journal article" date="2012" name="Science">
        <title>High-resolution view of the yeast meiotic program revealed by ribosome profiling.</title>
        <authorList>
            <person name="Brar G.A."/>
            <person name="Yassour M."/>
            <person name="Friedman N."/>
            <person name="Regev A."/>
            <person name="Ingolia N.T."/>
            <person name="Weissman J.S."/>
        </authorList>
    </citation>
    <scope>FUNCTION</scope>
</reference>
<comment type="function">
    <text evidence="4 5">Probable transcriptional activator involved in meiotic prophase and synaptonemal complex (SC) assembly.</text>
</comment>
<comment type="interaction">
    <interactant intactId="EBI-3786338">
        <id>Q06201</id>
    </interactant>
    <interactant intactId="EBI-37150">
        <id>Q04110</id>
        <label>ECM11</label>
    </interactant>
    <organismsDiffer>false</organismsDiffer>
    <experiments>4</experiments>
</comment>
<comment type="induction">
    <text evidence="2 3">Expression is induced in response to alpha factor and regulated by the UME6 transcription factor.</text>
</comment>
<comment type="sequence caution" evidence="6">
    <conflict type="erroneous gene model prediction">
        <sequence resource="EMBL-CDS" id="AAB67531"/>
    </conflict>
</comment>
<comment type="sequence caution" evidence="6">
    <conflict type="erroneous gene model prediction">
        <sequence resource="EMBL-CDS" id="AAS56556"/>
    </conflict>
</comment>
<evidence type="ECO:0000256" key="1">
    <source>
        <dbReference type="SAM" id="MobiDB-lite"/>
    </source>
</evidence>
<evidence type="ECO:0000269" key="2">
    <source>
    </source>
</evidence>
<evidence type="ECO:0000269" key="3">
    <source>
    </source>
</evidence>
<evidence type="ECO:0000269" key="4">
    <source>
    </source>
</evidence>
<evidence type="ECO:0000269" key="5">
    <source>
    </source>
</evidence>
<evidence type="ECO:0000305" key="6"/>
<accession>Q06201</accession>
<accession>D6VZ79</accession>
<protein>
    <recommendedName>
        <fullName>Grand meiotic recombination cluster protein 2</fullName>
    </recommendedName>
</protein>
<sequence length="188" mass="22365">MSDTTEVPRQSSENDQDNNLERTNSLKSPDVTNNIPSLFKLAAEWQINNPQETFQNHILENDVLKKINEITHLIRESYKDLSSQDGMMSKQQQEKMDWDLFCTVPVNIIEQYTKDMDEIYEKMERLAKQQRLWCESAFQIDVERCGDSILNAETWMKKKERHLEYKNIEMERSANEIKETIQRLTDDR</sequence>
<gene>
    <name type="primary">GMC2</name>
    <name type="ordered locus">YLR445W</name>
</gene>